<evidence type="ECO:0000255" key="1">
    <source>
        <dbReference type="HAMAP-Rule" id="MF_02002"/>
    </source>
</evidence>
<dbReference type="EC" id="6.1.1.5" evidence="1"/>
<dbReference type="EMBL" id="AL590842">
    <property type="protein sequence ID" value="CAL19154.1"/>
    <property type="molecule type" value="Genomic_DNA"/>
</dbReference>
<dbReference type="EMBL" id="AE009952">
    <property type="protein sequence ID" value="AAM87248.1"/>
    <property type="molecule type" value="Genomic_DNA"/>
</dbReference>
<dbReference type="EMBL" id="AE017042">
    <property type="protein sequence ID" value="AAS63853.1"/>
    <property type="molecule type" value="Genomic_DNA"/>
</dbReference>
<dbReference type="PIR" id="AH0058">
    <property type="entry name" value="AH0058"/>
</dbReference>
<dbReference type="RefSeq" id="WP_002210509.1">
    <property type="nucleotide sequence ID" value="NZ_WUCM01000002.1"/>
</dbReference>
<dbReference type="RefSeq" id="YP_002345547.1">
    <property type="nucleotide sequence ID" value="NC_003143.1"/>
</dbReference>
<dbReference type="SMR" id="Q8ZIM0"/>
<dbReference type="IntAct" id="Q8ZIM0">
    <property type="interactions" value="4"/>
</dbReference>
<dbReference type="STRING" id="214092.YPO0475"/>
<dbReference type="PaxDb" id="214092-YPO0475"/>
<dbReference type="DNASU" id="1148647"/>
<dbReference type="EnsemblBacteria" id="AAS63853">
    <property type="protein sequence ID" value="AAS63853"/>
    <property type="gene ID" value="YP_3705"/>
</dbReference>
<dbReference type="GeneID" id="57974135"/>
<dbReference type="KEGG" id="ype:YPO0475"/>
<dbReference type="KEGG" id="ypk:y3700"/>
<dbReference type="KEGG" id="ypm:YP_3705"/>
<dbReference type="PATRIC" id="fig|214092.21.peg.722"/>
<dbReference type="eggNOG" id="COG0060">
    <property type="taxonomic scope" value="Bacteria"/>
</dbReference>
<dbReference type="HOGENOM" id="CLU_001493_7_1_6"/>
<dbReference type="OMA" id="HCWRCKT"/>
<dbReference type="OrthoDB" id="9810365at2"/>
<dbReference type="Proteomes" id="UP000000815">
    <property type="component" value="Chromosome"/>
</dbReference>
<dbReference type="Proteomes" id="UP000001019">
    <property type="component" value="Chromosome"/>
</dbReference>
<dbReference type="Proteomes" id="UP000002490">
    <property type="component" value="Chromosome"/>
</dbReference>
<dbReference type="GO" id="GO:0005829">
    <property type="term" value="C:cytosol"/>
    <property type="evidence" value="ECO:0000318"/>
    <property type="project" value="GO_Central"/>
</dbReference>
<dbReference type="GO" id="GO:0002161">
    <property type="term" value="F:aminoacyl-tRNA deacylase activity"/>
    <property type="evidence" value="ECO:0007669"/>
    <property type="project" value="InterPro"/>
</dbReference>
<dbReference type="GO" id="GO:0005524">
    <property type="term" value="F:ATP binding"/>
    <property type="evidence" value="ECO:0007669"/>
    <property type="project" value="UniProtKB-UniRule"/>
</dbReference>
<dbReference type="GO" id="GO:0004822">
    <property type="term" value="F:isoleucine-tRNA ligase activity"/>
    <property type="evidence" value="ECO:0000318"/>
    <property type="project" value="GO_Central"/>
</dbReference>
<dbReference type="GO" id="GO:0000049">
    <property type="term" value="F:tRNA binding"/>
    <property type="evidence" value="ECO:0007669"/>
    <property type="project" value="InterPro"/>
</dbReference>
<dbReference type="GO" id="GO:0008270">
    <property type="term" value="F:zinc ion binding"/>
    <property type="evidence" value="ECO:0007669"/>
    <property type="project" value="UniProtKB-UniRule"/>
</dbReference>
<dbReference type="GO" id="GO:0006428">
    <property type="term" value="P:isoleucyl-tRNA aminoacylation"/>
    <property type="evidence" value="ECO:0000318"/>
    <property type="project" value="GO_Central"/>
</dbReference>
<dbReference type="CDD" id="cd07960">
    <property type="entry name" value="Anticodon_Ia_Ile_BEm"/>
    <property type="match status" value="1"/>
</dbReference>
<dbReference type="CDD" id="cd00818">
    <property type="entry name" value="IleRS_core"/>
    <property type="match status" value="1"/>
</dbReference>
<dbReference type="FunFam" id="1.10.730.20:FF:000001">
    <property type="entry name" value="Isoleucine--tRNA ligase"/>
    <property type="match status" value="1"/>
</dbReference>
<dbReference type="FunFam" id="3.40.50.620:FF:000042">
    <property type="entry name" value="Isoleucine--tRNA ligase"/>
    <property type="match status" value="1"/>
</dbReference>
<dbReference type="FunFam" id="3.40.50.620:FF:000048">
    <property type="entry name" value="Isoleucine--tRNA ligase"/>
    <property type="match status" value="1"/>
</dbReference>
<dbReference type="FunFam" id="3.90.740.10:FF:000002">
    <property type="entry name" value="Isoleucine--tRNA ligase"/>
    <property type="match status" value="1"/>
</dbReference>
<dbReference type="Gene3D" id="1.10.730.20">
    <property type="match status" value="1"/>
</dbReference>
<dbReference type="Gene3D" id="3.40.50.620">
    <property type="entry name" value="HUPs"/>
    <property type="match status" value="2"/>
</dbReference>
<dbReference type="Gene3D" id="3.90.740.10">
    <property type="entry name" value="Valyl/Leucyl/Isoleucyl-tRNA synthetase, editing domain"/>
    <property type="match status" value="1"/>
</dbReference>
<dbReference type="HAMAP" id="MF_02002">
    <property type="entry name" value="Ile_tRNA_synth_type1"/>
    <property type="match status" value="1"/>
</dbReference>
<dbReference type="InterPro" id="IPR001412">
    <property type="entry name" value="aa-tRNA-synth_I_CS"/>
</dbReference>
<dbReference type="InterPro" id="IPR002300">
    <property type="entry name" value="aa-tRNA-synth_Ia"/>
</dbReference>
<dbReference type="InterPro" id="IPR033708">
    <property type="entry name" value="Anticodon_Ile_BEm"/>
</dbReference>
<dbReference type="InterPro" id="IPR002301">
    <property type="entry name" value="Ile-tRNA-ligase"/>
</dbReference>
<dbReference type="InterPro" id="IPR023585">
    <property type="entry name" value="Ile-tRNA-ligase_type1"/>
</dbReference>
<dbReference type="InterPro" id="IPR050081">
    <property type="entry name" value="Ile-tRNA_ligase"/>
</dbReference>
<dbReference type="InterPro" id="IPR013155">
    <property type="entry name" value="M/V/L/I-tRNA-synth_anticd-bd"/>
</dbReference>
<dbReference type="InterPro" id="IPR014729">
    <property type="entry name" value="Rossmann-like_a/b/a_fold"/>
</dbReference>
<dbReference type="InterPro" id="IPR009080">
    <property type="entry name" value="tRNAsynth_Ia_anticodon-bd"/>
</dbReference>
<dbReference type="InterPro" id="IPR009008">
    <property type="entry name" value="Val/Leu/Ile-tRNA-synth_edit"/>
</dbReference>
<dbReference type="InterPro" id="IPR010663">
    <property type="entry name" value="Znf_FPG/IleRS"/>
</dbReference>
<dbReference type="NCBIfam" id="TIGR00392">
    <property type="entry name" value="ileS"/>
    <property type="match status" value="1"/>
</dbReference>
<dbReference type="PANTHER" id="PTHR42765:SF1">
    <property type="entry name" value="ISOLEUCINE--TRNA LIGASE, MITOCHONDRIAL"/>
    <property type="match status" value="1"/>
</dbReference>
<dbReference type="PANTHER" id="PTHR42765">
    <property type="entry name" value="SOLEUCYL-TRNA SYNTHETASE"/>
    <property type="match status" value="1"/>
</dbReference>
<dbReference type="Pfam" id="PF08264">
    <property type="entry name" value="Anticodon_1"/>
    <property type="match status" value="1"/>
</dbReference>
<dbReference type="Pfam" id="PF00133">
    <property type="entry name" value="tRNA-synt_1"/>
    <property type="match status" value="1"/>
</dbReference>
<dbReference type="Pfam" id="PF06827">
    <property type="entry name" value="zf-FPG_IleRS"/>
    <property type="match status" value="1"/>
</dbReference>
<dbReference type="PRINTS" id="PR00984">
    <property type="entry name" value="TRNASYNTHILE"/>
</dbReference>
<dbReference type="SUPFAM" id="SSF47323">
    <property type="entry name" value="Anticodon-binding domain of a subclass of class I aminoacyl-tRNA synthetases"/>
    <property type="match status" value="1"/>
</dbReference>
<dbReference type="SUPFAM" id="SSF52374">
    <property type="entry name" value="Nucleotidylyl transferase"/>
    <property type="match status" value="1"/>
</dbReference>
<dbReference type="SUPFAM" id="SSF50677">
    <property type="entry name" value="ValRS/IleRS/LeuRS editing domain"/>
    <property type="match status" value="1"/>
</dbReference>
<dbReference type="PROSITE" id="PS00178">
    <property type="entry name" value="AA_TRNA_LIGASE_I"/>
    <property type="match status" value="1"/>
</dbReference>
<gene>
    <name evidence="1" type="primary">ileS</name>
    <name type="ordered locus">YPO0475</name>
    <name type="ordered locus">y3700</name>
    <name type="ordered locus">YP_3705</name>
</gene>
<comment type="function">
    <text evidence="1">Catalyzes the attachment of isoleucine to tRNA(Ile). As IleRS can inadvertently accommodate and process structurally similar amino acids such as valine, to avoid such errors it has two additional distinct tRNA(Ile)-dependent editing activities. One activity is designated as 'pretransfer' editing and involves the hydrolysis of activated Val-AMP. The other activity is designated 'posttransfer' editing and involves deacylation of mischarged Val-tRNA(Ile).</text>
</comment>
<comment type="catalytic activity">
    <reaction evidence="1">
        <text>tRNA(Ile) + L-isoleucine + ATP = L-isoleucyl-tRNA(Ile) + AMP + diphosphate</text>
        <dbReference type="Rhea" id="RHEA:11060"/>
        <dbReference type="Rhea" id="RHEA-COMP:9666"/>
        <dbReference type="Rhea" id="RHEA-COMP:9695"/>
        <dbReference type="ChEBI" id="CHEBI:30616"/>
        <dbReference type="ChEBI" id="CHEBI:33019"/>
        <dbReference type="ChEBI" id="CHEBI:58045"/>
        <dbReference type="ChEBI" id="CHEBI:78442"/>
        <dbReference type="ChEBI" id="CHEBI:78528"/>
        <dbReference type="ChEBI" id="CHEBI:456215"/>
        <dbReference type="EC" id="6.1.1.5"/>
    </reaction>
</comment>
<comment type="cofactor">
    <cofactor evidence="1">
        <name>Zn(2+)</name>
        <dbReference type="ChEBI" id="CHEBI:29105"/>
    </cofactor>
    <text evidence="1">Binds 1 zinc ion per subunit.</text>
</comment>
<comment type="subunit">
    <text evidence="1">Monomer.</text>
</comment>
<comment type="subcellular location">
    <subcellularLocation>
        <location evidence="1">Cytoplasm</location>
    </subcellularLocation>
</comment>
<comment type="domain">
    <text evidence="1">IleRS has two distinct active sites: one for aminoacylation and one for editing. The misactivated valine is translocated from the active site to the editing site, which sterically excludes the correctly activated isoleucine. The single editing site contains two valyl binding pockets, one specific for each substrate (Val-AMP or Val-tRNA(Ile)).</text>
</comment>
<comment type="similarity">
    <text evidence="1">Belongs to the class-I aminoacyl-tRNA synthetase family. IleS type 1 subfamily.</text>
</comment>
<name>SYI_YERPE</name>
<protein>
    <recommendedName>
        <fullName evidence="1">Isoleucine--tRNA ligase</fullName>
        <ecNumber evidence="1">6.1.1.5</ecNumber>
    </recommendedName>
    <alternativeName>
        <fullName evidence="1">Isoleucyl-tRNA synthetase</fullName>
        <shortName evidence="1">IleRS</shortName>
    </alternativeName>
</protein>
<organism>
    <name type="scientific">Yersinia pestis</name>
    <dbReference type="NCBI Taxonomy" id="632"/>
    <lineage>
        <taxon>Bacteria</taxon>
        <taxon>Pseudomonadati</taxon>
        <taxon>Pseudomonadota</taxon>
        <taxon>Gammaproteobacteria</taxon>
        <taxon>Enterobacterales</taxon>
        <taxon>Yersiniaceae</taxon>
        <taxon>Yersinia</taxon>
    </lineage>
</organism>
<feature type="chain" id="PRO_0000098511" description="Isoleucine--tRNA ligase">
    <location>
        <begin position="1"/>
        <end position="938"/>
    </location>
</feature>
<feature type="short sequence motif" description="'HIGH' region">
    <location>
        <begin position="58"/>
        <end position="68"/>
    </location>
</feature>
<feature type="short sequence motif" description="'KMSKS' region">
    <location>
        <begin position="602"/>
        <end position="606"/>
    </location>
</feature>
<feature type="binding site" evidence="1">
    <location>
        <position position="561"/>
    </location>
    <ligand>
        <name>L-isoleucyl-5'-AMP</name>
        <dbReference type="ChEBI" id="CHEBI:178002"/>
    </ligand>
</feature>
<feature type="binding site" evidence="1">
    <location>
        <position position="605"/>
    </location>
    <ligand>
        <name>ATP</name>
        <dbReference type="ChEBI" id="CHEBI:30616"/>
    </ligand>
</feature>
<feature type="binding site" evidence="1">
    <location>
        <position position="901"/>
    </location>
    <ligand>
        <name>Zn(2+)</name>
        <dbReference type="ChEBI" id="CHEBI:29105"/>
    </ligand>
</feature>
<feature type="binding site" evidence="1">
    <location>
        <position position="904"/>
    </location>
    <ligand>
        <name>Zn(2+)</name>
        <dbReference type="ChEBI" id="CHEBI:29105"/>
    </ligand>
</feature>
<feature type="binding site" evidence="1">
    <location>
        <position position="921"/>
    </location>
    <ligand>
        <name>Zn(2+)</name>
        <dbReference type="ChEBI" id="CHEBI:29105"/>
    </ligand>
</feature>
<feature type="binding site" evidence="1">
    <location>
        <position position="924"/>
    </location>
    <ligand>
        <name>Zn(2+)</name>
        <dbReference type="ChEBI" id="CHEBI:29105"/>
    </ligand>
</feature>
<accession>Q8ZIM0</accession>
<accession>Q0WJJ1</accession>
<accession>Q74Q17</accession>
<accession>Q7CG80</accession>
<proteinExistence type="inferred from homology"/>
<keyword id="KW-0030">Aminoacyl-tRNA synthetase</keyword>
<keyword id="KW-0067">ATP-binding</keyword>
<keyword id="KW-0963">Cytoplasm</keyword>
<keyword id="KW-0436">Ligase</keyword>
<keyword id="KW-0479">Metal-binding</keyword>
<keyword id="KW-0547">Nucleotide-binding</keyword>
<keyword id="KW-0648">Protein biosynthesis</keyword>
<keyword id="KW-1185">Reference proteome</keyword>
<keyword id="KW-0862">Zinc</keyword>
<reference key="1">
    <citation type="journal article" date="2001" name="Nature">
        <title>Genome sequence of Yersinia pestis, the causative agent of plague.</title>
        <authorList>
            <person name="Parkhill J."/>
            <person name="Wren B.W."/>
            <person name="Thomson N.R."/>
            <person name="Titball R.W."/>
            <person name="Holden M.T.G."/>
            <person name="Prentice M.B."/>
            <person name="Sebaihia M."/>
            <person name="James K.D."/>
            <person name="Churcher C.M."/>
            <person name="Mungall K.L."/>
            <person name="Baker S."/>
            <person name="Basham D."/>
            <person name="Bentley S.D."/>
            <person name="Brooks K."/>
            <person name="Cerdeno-Tarraga A.-M."/>
            <person name="Chillingworth T."/>
            <person name="Cronin A."/>
            <person name="Davies R.M."/>
            <person name="Davis P."/>
            <person name="Dougan G."/>
            <person name="Feltwell T."/>
            <person name="Hamlin N."/>
            <person name="Holroyd S."/>
            <person name="Jagels K."/>
            <person name="Karlyshev A.V."/>
            <person name="Leather S."/>
            <person name="Moule S."/>
            <person name="Oyston P.C.F."/>
            <person name="Quail M.A."/>
            <person name="Rutherford K.M."/>
            <person name="Simmonds M."/>
            <person name="Skelton J."/>
            <person name="Stevens K."/>
            <person name="Whitehead S."/>
            <person name="Barrell B.G."/>
        </authorList>
    </citation>
    <scope>NUCLEOTIDE SEQUENCE [LARGE SCALE GENOMIC DNA]</scope>
    <source>
        <strain>CO-92 / Biovar Orientalis</strain>
    </source>
</reference>
<reference key="2">
    <citation type="journal article" date="2002" name="J. Bacteriol.">
        <title>Genome sequence of Yersinia pestis KIM.</title>
        <authorList>
            <person name="Deng W."/>
            <person name="Burland V."/>
            <person name="Plunkett G. III"/>
            <person name="Boutin A."/>
            <person name="Mayhew G.F."/>
            <person name="Liss P."/>
            <person name="Perna N.T."/>
            <person name="Rose D.J."/>
            <person name="Mau B."/>
            <person name="Zhou S."/>
            <person name="Schwartz D.C."/>
            <person name="Fetherston J.D."/>
            <person name="Lindler L.E."/>
            <person name="Brubaker R.R."/>
            <person name="Plano G.V."/>
            <person name="Straley S.C."/>
            <person name="McDonough K.A."/>
            <person name="Nilles M.L."/>
            <person name="Matson J.S."/>
            <person name="Blattner F.R."/>
            <person name="Perry R.D."/>
        </authorList>
    </citation>
    <scope>NUCLEOTIDE SEQUENCE [LARGE SCALE GENOMIC DNA]</scope>
    <source>
        <strain>KIM10+ / Biovar Mediaevalis</strain>
    </source>
</reference>
<reference key="3">
    <citation type="journal article" date="2004" name="DNA Res.">
        <title>Complete genome sequence of Yersinia pestis strain 91001, an isolate avirulent to humans.</title>
        <authorList>
            <person name="Song Y."/>
            <person name="Tong Z."/>
            <person name="Wang J."/>
            <person name="Wang L."/>
            <person name="Guo Z."/>
            <person name="Han Y."/>
            <person name="Zhang J."/>
            <person name="Pei D."/>
            <person name="Zhou D."/>
            <person name="Qin H."/>
            <person name="Pang X."/>
            <person name="Han Y."/>
            <person name="Zhai J."/>
            <person name="Li M."/>
            <person name="Cui B."/>
            <person name="Qi Z."/>
            <person name="Jin L."/>
            <person name="Dai R."/>
            <person name="Chen F."/>
            <person name="Li S."/>
            <person name="Ye C."/>
            <person name="Du Z."/>
            <person name="Lin W."/>
            <person name="Wang J."/>
            <person name="Yu J."/>
            <person name="Yang H."/>
            <person name="Wang J."/>
            <person name="Huang P."/>
            <person name="Yang R."/>
        </authorList>
    </citation>
    <scope>NUCLEOTIDE SEQUENCE [LARGE SCALE GENOMIC DNA]</scope>
    <source>
        <strain>91001 / Biovar Mediaevalis</strain>
    </source>
</reference>
<sequence>MSDYKNTLNLPETGFPMRGDLAKREPDMLKRWYEQDLYGIIRAAKKGKKTFILHDGPPYANGNIHIGHSVNKILKDIIVKSKGMAGYDSPYIPGWDCHGLPIELKVEQLIGKPGEKVSAAEFRTACRKYAAEQVEGQKKDFIRLGVLGDWDHPYLTMDFKTEANIIRALSKIIDNGHLHKGAKPVHWCTDCGSSLAEAEVEYYDKTSQSIDVRFNAVDTATVAAKFGVSAVNGPISLVIWTTTPWTLPANRAISLNAEYLYQLVQVEGECLILAADLVESVMKRAGITQWAVLGSCTGSDLELLRFTHPFMGFDVPAILGDHVTLDAGTGAVHTAPGHGPDDFVIGQKYGLEVANPVGPNGCYLAGTYPTLDGLFVFKANDVVVELLREKGALLHVEKLLHSYPCCWRHKTPIIFRATPQWFISMDQKGLRKQSLQEIKGVQWIPDWGQARIETMVANRPDWCISRQRTWGVPMSLFVHKETEQLHPRSIELMEEVAKRVEQDGIQAWWDLDPAEILGADAADYVKVPDTLDVWFDSGSTHSSVVDVRPEFGGHSPDMYLEGSDQHRGWFMSSLMIATAMKGKAPYRQVLTHGFTVDGQGRKMSKSIGNTISPQDVMNKLGGDILRLWVASTDYTGEIAVSDEILKRSADSYRRIRNTARFLLANLNGFDPAQHQVKPEEMVVVDRWAVGRAQAAQAEIMEAYENYDFHLVVQRLMQFCSVEMGSFYLDIIKDRQYTAKGDGIARRSCQTALFHIAEALVRWMAPIMSFTADEIWNHLPGERQQYVFTEEWYDGLFGLAGNESMNDTFWAELLKVRGEVNKVLEQARSDKRIGGSLEAAVTLYAEPELAARLNSLQDELRFVLLTSAAKVAAYADAGNDAQQSELIAGLKITFNKADGEKCPRCWHYTQDVGLVAEHAELCGRCVTNVAGDGEERKFA</sequence>